<proteinExistence type="inferred from homology"/>
<accession>Q4UQW2</accession>
<evidence type="ECO:0000255" key="1">
    <source>
        <dbReference type="HAMAP-Rule" id="MF_01008"/>
    </source>
</evidence>
<evidence type="ECO:0000255" key="2">
    <source>
        <dbReference type="PROSITE-ProRule" id="PRU01076"/>
    </source>
</evidence>
<evidence type="ECO:0000305" key="3"/>
<comment type="subunit">
    <text evidence="1">Forms oligomers.</text>
</comment>
<comment type="subcellular location">
    <subcellularLocation>
        <location evidence="1">Cytoplasm</location>
        <location evidence="1">Nucleoid</location>
    </subcellularLocation>
</comment>
<comment type="similarity">
    <text evidence="1">Belongs to the MraZ family.</text>
</comment>
<comment type="sequence caution" evidence="3">
    <conflict type="erroneous initiation">
        <sequence resource="EMBL-CDS" id="AAY50561"/>
    </conflict>
</comment>
<keyword id="KW-0963">Cytoplasm</keyword>
<keyword id="KW-0238">DNA-binding</keyword>
<keyword id="KW-0677">Repeat</keyword>
<keyword id="KW-0804">Transcription</keyword>
<keyword id="KW-0805">Transcription regulation</keyword>
<reference key="1">
    <citation type="journal article" date="2005" name="Genome Res.">
        <title>Comparative and functional genomic analyses of the pathogenicity of phytopathogen Xanthomonas campestris pv. campestris.</title>
        <authorList>
            <person name="Qian W."/>
            <person name="Jia Y."/>
            <person name="Ren S.-X."/>
            <person name="He Y.-Q."/>
            <person name="Feng J.-X."/>
            <person name="Lu L.-F."/>
            <person name="Sun Q."/>
            <person name="Ying G."/>
            <person name="Tang D.-J."/>
            <person name="Tang H."/>
            <person name="Wu W."/>
            <person name="Hao P."/>
            <person name="Wang L."/>
            <person name="Jiang B.-L."/>
            <person name="Zeng S."/>
            <person name="Gu W.-Y."/>
            <person name="Lu G."/>
            <person name="Rong L."/>
            <person name="Tian Y."/>
            <person name="Yao Z."/>
            <person name="Fu G."/>
            <person name="Chen B."/>
            <person name="Fang R."/>
            <person name="Qiang B."/>
            <person name="Chen Z."/>
            <person name="Zhao G.-P."/>
            <person name="Tang J.-L."/>
            <person name="He C."/>
        </authorList>
    </citation>
    <scope>NUCLEOTIDE SEQUENCE [LARGE SCALE GENOMIC DNA]</scope>
    <source>
        <strain>8004</strain>
    </source>
</reference>
<dbReference type="EMBL" id="CP000050">
    <property type="protein sequence ID" value="AAY50561.1"/>
    <property type="status" value="ALT_INIT"/>
    <property type="molecule type" value="Genomic_DNA"/>
</dbReference>
<dbReference type="SMR" id="Q4UQW2"/>
<dbReference type="KEGG" id="xcb:XC_3518"/>
<dbReference type="HOGENOM" id="CLU_107907_2_0_6"/>
<dbReference type="Proteomes" id="UP000000420">
    <property type="component" value="Chromosome"/>
</dbReference>
<dbReference type="GO" id="GO:0005737">
    <property type="term" value="C:cytoplasm"/>
    <property type="evidence" value="ECO:0007669"/>
    <property type="project" value="UniProtKB-UniRule"/>
</dbReference>
<dbReference type="GO" id="GO:0009295">
    <property type="term" value="C:nucleoid"/>
    <property type="evidence" value="ECO:0007669"/>
    <property type="project" value="UniProtKB-SubCell"/>
</dbReference>
<dbReference type="GO" id="GO:0003700">
    <property type="term" value="F:DNA-binding transcription factor activity"/>
    <property type="evidence" value="ECO:0007669"/>
    <property type="project" value="UniProtKB-UniRule"/>
</dbReference>
<dbReference type="GO" id="GO:0000976">
    <property type="term" value="F:transcription cis-regulatory region binding"/>
    <property type="evidence" value="ECO:0007669"/>
    <property type="project" value="TreeGrafter"/>
</dbReference>
<dbReference type="GO" id="GO:2000143">
    <property type="term" value="P:negative regulation of DNA-templated transcription initiation"/>
    <property type="evidence" value="ECO:0007669"/>
    <property type="project" value="TreeGrafter"/>
</dbReference>
<dbReference type="CDD" id="cd16321">
    <property type="entry name" value="MraZ_C"/>
    <property type="match status" value="1"/>
</dbReference>
<dbReference type="CDD" id="cd16320">
    <property type="entry name" value="MraZ_N"/>
    <property type="match status" value="1"/>
</dbReference>
<dbReference type="FunFam" id="3.40.1550.20:FF:000003">
    <property type="entry name" value="Transcriptional regulator MraZ"/>
    <property type="match status" value="1"/>
</dbReference>
<dbReference type="Gene3D" id="3.40.1550.20">
    <property type="entry name" value="Transcriptional regulator MraZ domain"/>
    <property type="match status" value="1"/>
</dbReference>
<dbReference type="HAMAP" id="MF_01008">
    <property type="entry name" value="MraZ"/>
    <property type="match status" value="1"/>
</dbReference>
<dbReference type="InterPro" id="IPR003444">
    <property type="entry name" value="MraZ"/>
</dbReference>
<dbReference type="InterPro" id="IPR035644">
    <property type="entry name" value="MraZ_C"/>
</dbReference>
<dbReference type="InterPro" id="IPR020603">
    <property type="entry name" value="MraZ_dom"/>
</dbReference>
<dbReference type="InterPro" id="IPR035642">
    <property type="entry name" value="MraZ_N"/>
</dbReference>
<dbReference type="InterPro" id="IPR038619">
    <property type="entry name" value="MraZ_sf"/>
</dbReference>
<dbReference type="InterPro" id="IPR007159">
    <property type="entry name" value="SpoVT-AbrB_dom"/>
</dbReference>
<dbReference type="InterPro" id="IPR037914">
    <property type="entry name" value="SpoVT-AbrB_sf"/>
</dbReference>
<dbReference type="NCBIfam" id="TIGR00242">
    <property type="entry name" value="division/cell wall cluster transcriptional repressor MraZ"/>
    <property type="match status" value="1"/>
</dbReference>
<dbReference type="PANTHER" id="PTHR34701">
    <property type="entry name" value="TRANSCRIPTIONAL REGULATOR MRAZ"/>
    <property type="match status" value="1"/>
</dbReference>
<dbReference type="PANTHER" id="PTHR34701:SF1">
    <property type="entry name" value="TRANSCRIPTIONAL REGULATOR MRAZ"/>
    <property type="match status" value="1"/>
</dbReference>
<dbReference type="Pfam" id="PF02381">
    <property type="entry name" value="MraZ"/>
    <property type="match status" value="2"/>
</dbReference>
<dbReference type="SUPFAM" id="SSF89447">
    <property type="entry name" value="AbrB/MazE/MraZ-like"/>
    <property type="match status" value="1"/>
</dbReference>
<dbReference type="PROSITE" id="PS51740">
    <property type="entry name" value="SPOVT_ABRB"/>
    <property type="match status" value="2"/>
</dbReference>
<name>MRAZ_XANC8</name>
<sequence>MFQGETAITVDDKGRMAVPTAYRDLVARVSGNRLVLTYNPFEAGCLWLYAEKEWERVRDDVMSKPNTQRVVRTLQQKLVGSSAVLELDANGRLSIPASHRNAVGIEKKAVLLGMGDKFELWSEQAHRALIQQTLSDGDLGDELLDLRL</sequence>
<protein>
    <recommendedName>
        <fullName>Transcriptional regulator MraZ</fullName>
    </recommendedName>
</protein>
<feature type="chain" id="PRO_0000230117" description="Transcriptional regulator MraZ">
    <location>
        <begin position="1"/>
        <end position="148"/>
    </location>
</feature>
<feature type="domain" description="SpoVT-AbrB 1" evidence="2">
    <location>
        <begin position="5"/>
        <end position="53"/>
    </location>
</feature>
<feature type="domain" description="SpoVT-AbrB 2" evidence="2">
    <location>
        <begin position="82"/>
        <end position="125"/>
    </location>
</feature>
<gene>
    <name evidence="1" type="primary">mraZ</name>
    <name type="ordered locus">XC_3518</name>
</gene>
<organism>
    <name type="scientific">Xanthomonas campestris pv. campestris (strain 8004)</name>
    <dbReference type="NCBI Taxonomy" id="314565"/>
    <lineage>
        <taxon>Bacteria</taxon>
        <taxon>Pseudomonadati</taxon>
        <taxon>Pseudomonadota</taxon>
        <taxon>Gammaproteobacteria</taxon>
        <taxon>Lysobacterales</taxon>
        <taxon>Lysobacteraceae</taxon>
        <taxon>Xanthomonas</taxon>
    </lineage>
</organism>